<organism>
    <name type="scientific">Photorhabdus laumondii subsp. laumondii (strain DSM 15139 / CIP 105565 / TT01)</name>
    <name type="common">Photorhabdus luminescens subsp. laumondii</name>
    <dbReference type="NCBI Taxonomy" id="243265"/>
    <lineage>
        <taxon>Bacteria</taxon>
        <taxon>Pseudomonadati</taxon>
        <taxon>Pseudomonadota</taxon>
        <taxon>Gammaproteobacteria</taxon>
        <taxon>Enterobacterales</taxon>
        <taxon>Morganellaceae</taxon>
        <taxon>Photorhabdus</taxon>
    </lineage>
</organism>
<reference key="1">
    <citation type="journal article" date="2003" name="Nat. Biotechnol.">
        <title>The genome sequence of the entomopathogenic bacterium Photorhabdus luminescens.</title>
        <authorList>
            <person name="Duchaud E."/>
            <person name="Rusniok C."/>
            <person name="Frangeul L."/>
            <person name="Buchrieser C."/>
            <person name="Givaudan A."/>
            <person name="Taourit S."/>
            <person name="Bocs S."/>
            <person name="Boursaux-Eude C."/>
            <person name="Chandler M."/>
            <person name="Charles J.-F."/>
            <person name="Dassa E."/>
            <person name="Derose R."/>
            <person name="Derzelle S."/>
            <person name="Freyssinet G."/>
            <person name="Gaudriault S."/>
            <person name="Medigue C."/>
            <person name="Lanois A."/>
            <person name="Powell K."/>
            <person name="Siguier P."/>
            <person name="Vincent R."/>
            <person name="Wingate V."/>
            <person name="Zouine M."/>
            <person name="Glaser P."/>
            <person name="Boemare N."/>
            <person name="Danchin A."/>
            <person name="Kunst F."/>
        </authorList>
    </citation>
    <scope>NUCLEOTIDE SEQUENCE [LARGE SCALE GENOMIC DNA]</scope>
    <source>
        <strain>DSM 15139 / CIP 105565 / TT01</strain>
    </source>
</reference>
<keyword id="KW-0119">Carbohydrate metabolism</keyword>
<keyword id="KW-0963">Cytoplasm</keyword>
<keyword id="KW-0413">Isomerase</keyword>
<keyword id="KW-1185">Reference proteome</keyword>
<sequence>MKKGVLLNSEISAVISQLGHTDQITIGDAGLPIPSLAQRIDLALTQGIPSFISVLNVVTQEMQIEAAFLAEEIIGHNPLIHQLILTQIKELEKQQGNSITVDYISHNVLKEKTKHSRAVIRTGEHSPYANIILGAGVTF</sequence>
<name>RBSD_PHOLL</name>
<dbReference type="EC" id="5.4.99.62" evidence="1"/>
<dbReference type="EMBL" id="BX571859">
    <property type="protein sequence ID" value="CAE12350.1"/>
    <property type="molecule type" value="Genomic_DNA"/>
</dbReference>
<dbReference type="RefSeq" id="WP_011144467.1">
    <property type="nucleotide sequence ID" value="NC_005126.1"/>
</dbReference>
<dbReference type="SMR" id="Q7NA80"/>
<dbReference type="STRING" id="243265.plu0055"/>
<dbReference type="GeneID" id="48846355"/>
<dbReference type="KEGG" id="plu:plu0055"/>
<dbReference type="eggNOG" id="COG1869">
    <property type="taxonomic scope" value="Bacteria"/>
</dbReference>
<dbReference type="HOGENOM" id="CLU_135498_0_0_6"/>
<dbReference type="OrthoDB" id="9805009at2"/>
<dbReference type="UniPathway" id="UPA00916">
    <property type="reaction ID" value="UER00888"/>
</dbReference>
<dbReference type="Proteomes" id="UP000002514">
    <property type="component" value="Chromosome"/>
</dbReference>
<dbReference type="GO" id="GO:0005829">
    <property type="term" value="C:cytosol"/>
    <property type="evidence" value="ECO:0007669"/>
    <property type="project" value="TreeGrafter"/>
</dbReference>
<dbReference type="GO" id="GO:0062193">
    <property type="term" value="F:D-ribose pyranase activity"/>
    <property type="evidence" value="ECO:0007669"/>
    <property type="project" value="UniProtKB-EC"/>
</dbReference>
<dbReference type="GO" id="GO:0016872">
    <property type="term" value="F:intramolecular lyase activity"/>
    <property type="evidence" value="ECO:0007669"/>
    <property type="project" value="UniProtKB-UniRule"/>
</dbReference>
<dbReference type="GO" id="GO:0048029">
    <property type="term" value="F:monosaccharide binding"/>
    <property type="evidence" value="ECO:0007669"/>
    <property type="project" value="InterPro"/>
</dbReference>
<dbReference type="GO" id="GO:0019303">
    <property type="term" value="P:D-ribose catabolic process"/>
    <property type="evidence" value="ECO:0007669"/>
    <property type="project" value="UniProtKB-UniRule"/>
</dbReference>
<dbReference type="Gene3D" id="3.40.1650.10">
    <property type="entry name" value="RbsD-like domain"/>
    <property type="match status" value="1"/>
</dbReference>
<dbReference type="HAMAP" id="MF_01661">
    <property type="entry name" value="D_rib_pyranase"/>
    <property type="match status" value="1"/>
</dbReference>
<dbReference type="InterPro" id="IPR023064">
    <property type="entry name" value="D-ribose_pyranase"/>
</dbReference>
<dbReference type="InterPro" id="IPR023750">
    <property type="entry name" value="RbsD-like_sf"/>
</dbReference>
<dbReference type="InterPro" id="IPR007721">
    <property type="entry name" value="RbsD_FucU"/>
</dbReference>
<dbReference type="NCBIfam" id="NF008761">
    <property type="entry name" value="PRK11797.1"/>
    <property type="match status" value="1"/>
</dbReference>
<dbReference type="PANTHER" id="PTHR37831">
    <property type="entry name" value="D-RIBOSE PYRANASE"/>
    <property type="match status" value="1"/>
</dbReference>
<dbReference type="PANTHER" id="PTHR37831:SF1">
    <property type="entry name" value="D-RIBOSE PYRANASE"/>
    <property type="match status" value="1"/>
</dbReference>
<dbReference type="Pfam" id="PF05025">
    <property type="entry name" value="RbsD_FucU"/>
    <property type="match status" value="1"/>
</dbReference>
<dbReference type="SUPFAM" id="SSF102546">
    <property type="entry name" value="RbsD-like"/>
    <property type="match status" value="1"/>
</dbReference>
<gene>
    <name evidence="1" type="primary">rbsD</name>
    <name type="ordered locus">plu0055</name>
</gene>
<accession>Q7NA80</accession>
<feature type="chain" id="PRO_0000346232" description="D-ribose pyranase">
    <location>
        <begin position="1"/>
        <end position="139"/>
    </location>
</feature>
<feature type="active site" description="Proton donor" evidence="1">
    <location>
        <position position="20"/>
    </location>
</feature>
<feature type="binding site" evidence="1">
    <location>
        <position position="28"/>
    </location>
    <ligand>
        <name>substrate</name>
    </ligand>
</feature>
<feature type="binding site" evidence="1">
    <location>
        <position position="106"/>
    </location>
    <ligand>
        <name>substrate</name>
    </ligand>
</feature>
<feature type="binding site" evidence="1">
    <location>
        <begin position="128"/>
        <end position="130"/>
    </location>
    <ligand>
        <name>substrate</name>
    </ligand>
</feature>
<proteinExistence type="inferred from homology"/>
<evidence type="ECO:0000255" key="1">
    <source>
        <dbReference type="HAMAP-Rule" id="MF_01661"/>
    </source>
</evidence>
<comment type="function">
    <text evidence="1">Catalyzes the interconversion of beta-pyran and beta-furan forms of D-ribose.</text>
</comment>
<comment type="catalytic activity">
    <reaction evidence="1">
        <text>beta-D-ribopyranose = beta-D-ribofuranose</text>
        <dbReference type="Rhea" id="RHEA:25432"/>
        <dbReference type="ChEBI" id="CHEBI:27476"/>
        <dbReference type="ChEBI" id="CHEBI:47002"/>
        <dbReference type="EC" id="5.4.99.62"/>
    </reaction>
</comment>
<comment type="pathway">
    <text evidence="1">Carbohydrate metabolism; D-ribose degradation; D-ribose 5-phosphate from beta-D-ribopyranose: step 1/2.</text>
</comment>
<comment type="subunit">
    <text evidence="1">Homodecamer.</text>
</comment>
<comment type="subcellular location">
    <subcellularLocation>
        <location evidence="1">Cytoplasm</location>
    </subcellularLocation>
</comment>
<comment type="similarity">
    <text evidence="1">Belongs to the RbsD / FucU family. RbsD subfamily.</text>
</comment>
<protein>
    <recommendedName>
        <fullName evidence="1">D-ribose pyranase</fullName>
        <ecNumber evidence="1">5.4.99.62</ecNumber>
    </recommendedName>
</protein>